<sequence length="1044" mass="119127">MGSNDLNTWVSDKLMVLLGFSQTAVVQYLIAMAKQSKSPGELVRELVECGFSLSGDTRAFAEEIYARAPRKTPGVNLYQQQEAEAAMLLKKQKTFSLLEADHDEDENNVKKQSASKTGKSDKGQKRFRKKSEQLEDDDDEVVIVREDKRNVRRKVSEDEDDGTESEEERLRDQREREELEQHLRERDTARTRKLTEPKMSKKEQEEFVRRDSAVDKGDIESLRKFSWQEYMKKRKQKKVLELKDDIEDEPYLFGDEKLTEREIREFRYKREIYELIKKSTQEEDNVGEYRMPDAYDQQGSVDQEKRFAVSVQRYRDMGSAEKMNPFAEQEAWEDHQIENAALKFGAKNKEVSDNYEFVFEDQIDFIKASVLAGDNYEDEMHAKPSQDSAGKSAFHMLQEDRKALPIYTYRDQLLNAVKDHQVLIIVGETGSGKTTQIPQYLHEAGYTKLGKVGCTQPRRVAAMSVAARVAQEMGGKLGHEVGYSIRFEDCTSEKTILKYMTDGMLLRELLGEPDLGSYSVIIVDEAHERTLRTDILFGLVKDIARARPDLKLLISSATMDAEKFSDFFDQAPIFRFPGRRYPVDICFTTAPEADYMDAAITTVLTIHVKEPLGDVLVFLPGQEEIEAVEENLKHKIRGLGTKIRELIICPIYANLPSELQAKIFEPTPEGARKVVLATNIAETSLTIDGIKYVVDPGFSKMKSYNPRTGMESLLVTPISKASATQRTGRAGRTSPGKCYRLYTAFNYYNDLEDNTVPEIQRTNLASVVLSLKSLGIHNLLNFDFMDPPPSEALIKSLELLFALGALNQLGELTKAGRRMAEFPLDPMLSKMIVVSDKYKCSDEIISIAAMLSIGPSIFYRPKDKQVHADNAMKNFHVGNVGDHIAFLKIYNSWKETNYSTQWCYENYIQVRSMKRARDIRDQLEGLLERVEIDVSSNANELDSIRKSIVAGFFPHTAKLQKNGSYRTVKHPQTVHIHPASGLSQVLPRWVVYHQLVLTSKEYMRQVTELKPEWLIEIAPHYYQLKDVEDATSKKMPKTSGRAVV</sequence>
<name>DEAH6_ARATH</name>
<reference key="1">
    <citation type="journal article" date="1999" name="Nature">
        <title>Sequence and analysis of chromosome 2 of the plant Arabidopsis thaliana.</title>
        <authorList>
            <person name="Lin X."/>
            <person name="Kaul S."/>
            <person name="Rounsley S.D."/>
            <person name="Shea T.P."/>
            <person name="Benito M.-I."/>
            <person name="Town C.D."/>
            <person name="Fujii C.Y."/>
            <person name="Mason T.M."/>
            <person name="Bowman C.L."/>
            <person name="Barnstead M.E."/>
            <person name="Feldblyum T.V."/>
            <person name="Buell C.R."/>
            <person name="Ketchum K.A."/>
            <person name="Lee J.J."/>
            <person name="Ronning C.M."/>
            <person name="Koo H.L."/>
            <person name="Moffat K.S."/>
            <person name="Cronin L.A."/>
            <person name="Shen M."/>
            <person name="Pai G."/>
            <person name="Van Aken S."/>
            <person name="Umayam L."/>
            <person name="Tallon L.J."/>
            <person name="Gill J.E."/>
            <person name="Adams M.D."/>
            <person name="Carrera A.J."/>
            <person name="Creasy T.H."/>
            <person name="Goodman H.M."/>
            <person name="Somerville C.R."/>
            <person name="Copenhaver G.P."/>
            <person name="Preuss D."/>
            <person name="Nierman W.C."/>
            <person name="White O."/>
            <person name="Eisen J.A."/>
            <person name="Salzberg S.L."/>
            <person name="Fraser C.M."/>
            <person name="Venter J.C."/>
        </authorList>
    </citation>
    <scope>NUCLEOTIDE SEQUENCE [LARGE SCALE GENOMIC DNA]</scope>
    <source>
        <strain>cv. Columbia</strain>
    </source>
</reference>
<reference key="2">
    <citation type="journal article" date="2017" name="Plant J.">
        <title>Araport11: a complete reannotation of the Arabidopsis thaliana reference genome.</title>
        <authorList>
            <person name="Cheng C.Y."/>
            <person name="Krishnakumar V."/>
            <person name="Chan A.P."/>
            <person name="Thibaud-Nissen F."/>
            <person name="Schobel S."/>
            <person name="Town C.D."/>
        </authorList>
    </citation>
    <scope>GENOME REANNOTATION</scope>
    <source>
        <strain>cv. Columbia</strain>
    </source>
</reference>
<reference key="3">
    <citation type="submission" date="2006-07" db="EMBL/GenBank/DDBJ databases">
        <title>Large-scale analysis of RIKEN Arabidopsis full-length (RAFL) cDNAs.</title>
        <authorList>
            <person name="Totoki Y."/>
            <person name="Seki M."/>
            <person name="Ishida J."/>
            <person name="Nakajima M."/>
            <person name="Enju A."/>
            <person name="Kamiya A."/>
            <person name="Narusaka M."/>
            <person name="Shin-i T."/>
            <person name="Nakagawa M."/>
            <person name="Sakamoto N."/>
            <person name="Oishi K."/>
            <person name="Kohara Y."/>
            <person name="Kobayashi M."/>
            <person name="Toyoda A."/>
            <person name="Sakaki Y."/>
            <person name="Sakurai T."/>
            <person name="Iida K."/>
            <person name="Akiyama K."/>
            <person name="Satou M."/>
            <person name="Toyoda T."/>
            <person name="Konagaya A."/>
            <person name="Carninci P."/>
            <person name="Kawai J."/>
            <person name="Hayashizaki Y."/>
            <person name="Shinozaki K."/>
        </authorList>
    </citation>
    <scope>NUCLEOTIDE SEQUENCE [LARGE SCALE MRNA]</scope>
    <source>
        <strain>cv. Columbia</strain>
    </source>
</reference>
<reference key="4">
    <citation type="journal article" date="2005" name="Development">
        <title>Genetic and molecular identification of genes required for female gametophyte development and function in Arabidopsis.</title>
        <authorList>
            <person name="Pagnussat G.C."/>
            <person name="Yu H.-J."/>
            <person name="Ngo Q.A."/>
            <person name="Rajani S."/>
            <person name="Mayalagu S."/>
            <person name="Johnson C.S."/>
            <person name="Capron A."/>
            <person name="Xie L.-F."/>
            <person name="Ye D."/>
            <person name="Sundaresan V."/>
        </authorList>
    </citation>
    <scope>DISRUPTION PHENOTYPE</scope>
</reference>
<reference key="5">
    <citation type="journal article" date="2006" name="Proc. Natl. Acad. Sci. U.S.A.">
        <title>Defective RNA processing enhances RNA silencing and influences flowering of Arabidopsis.</title>
        <authorList>
            <person name="Herr A.J."/>
            <person name="Molnar A."/>
            <person name="Jones A."/>
            <person name="Baulcombe D.C."/>
        </authorList>
    </citation>
    <scope>IDENTIFICATION</scope>
    <scope>TISSUE SPECIFICITY</scope>
</reference>
<reference key="6">
    <citation type="journal article" date="2013" name="PLoS ONE">
        <title>Genome-wide comparative in silico analysis of the RNA helicase gene family in Zea mays and Glycine max: a comparison with Arabidopsis and Oryza sativa.</title>
        <authorList>
            <person name="Xu R."/>
            <person name="Zhang S."/>
            <person name="Huang J."/>
            <person name="Zheng C."/>
        </authorList>
    </citation>
    <scope>GENE FAMILY</scope>
</reference>
<accession>F4IJV4</accession>
<accession>O82303</accession>
<accession>Q0WVI8</accession>
<organism>
    <name type="scientific">Arabidopsis thaliana</name>
    <name type="common">Mouse-ear cress</name>
    <dbReference type="NCBI Taxonomy" id="3702"/>
    <lineage>
        <taxon>Eukaryota</taxon>
        <taxon>Viridiplantae</taxon>
        <taxon>Streptophyta</taxon>
        <taxon>Embryophyta</taxon>
        <taxon>Tracheophyta</taxon>
        <taxon>Spermatophyta</taxon>
        <taxon>Magnoliopsida</taxon>
        <taxon>eudicotyledons</taxon>
        <taxon>Gunneridae</taxon>
        <taxon>Pentapetalae</taxon>
        <taxon>rosids</taxon>
        <taxon>malvids</taxon>
        <taxon>Brassicales</taxon>
        <taxon>Brassicaceae</taxon>
        <taxon>Camelineae</taxon>
        <taxon>Arabidopsis</taxon>
    </lineage>
</organism>
<comment type="function">
    <text evidence="8">May be involved in pre-mRNA splicing.</text>
</comment>
<comment type="catalytic activity">
    <reaction>
        <text>ATP + H2O = ADP + phosphate + H(+)</text>
        <dbReference type="Rhea" id="RHEA:13065"/>
        <dbReference type="ChEBI" id="CHEBI:15377"/>
        <dbReference type="ChEBI" id="CHEBI:15378"/>
        <dbReference type="ChEBI" id="CHEBI:30616"/>
        <dbReference type="ChEBI" id="CHEBI:43474"/>
        <dbReference type="ChEBI" id="CHEBI:456216"/>
        <dbReference type="EC" id="3.6.4.13"/>
    </reaction>
</comment>
<comment type="tissue specificity">
    <text evidence="5">Predominantly expressed in flowers.</text>
</comment>
<comment type="disruption phenotype">
    <text evidence="4">Embryo defective. Arrested at one-cell zygotic stage.</text>
</comment>
<comment type="similarity">
    <text evidence="8">Belongs to the DEAD box helicase family. DEAH subfamily. PRP2 sub-subfamily.</text>
</comment>
<comment type="sequence caution" evidence="8">
    <conflict type="erroneous gene model prediction">
        <sequence resource="EMBL-CDS" id="AAC36188"/>
    </conflict>
</comment>
<gene>
    <name evidence="6" type="primary">MEE29</name>
    <name evidence="9" type="ordered locus">At2g35340</name>
    <name evidence="10" type="ORF">T32F12.28</name>
</gene>
<keyword id="KW-0067">ATP-binding</keyword>
<keyword id="KW-0347">Helicase</keyword>
<keyword id="KW-0378">Hydrolase</keyword>
<keyword id="KW-0507">mRNA processing</keyword>
<keyword id="KW-0508">mRNA splicing</keyword>
<keyword id="KW-0547">Nucleotide-binding</keyword>
<keyword id="KW-1185">Reference proteome</keyword>
<keyword id="KW-0747">Spliceosome</keyword>
<protein>
    <recommendedName>
        <fullName evidence="8">Probable pre-mRNA-splicing factor ATP-dependent RNA helicase DEAH6</fullName>
        <ecNumber>3.6.4.13</ecNumber>
    </recommendedName>
    <alternativeName>
        <fullName evidence="7">DEAH RNA helicase homolog PRP2</fullName>
    </alternativeName>
    <alternativeName>
        <fullName evidence="6">Protein MATERNAL EFFECT EMBRYO ARREST 29</fullName>
    </alternativeName>
</protein>
<dbReference type="EC" id="3.6.4.13"/>
<dbReference type="EMBL" id="AC005314">
    <property type="protein sequence ID" value="AAC36188.1"/>
    <property type="status" value="ALT_SEQ"/>
    <property type="molecule type" value="Genomic_DNA"/>
</dbReference>
<dbReference type="EMBL" id="CP002685">
    <property type="protein sequence ID" value="AEC09096.1"/>
    <property type="molecule type" value="Genomic_DNA"/>
</dbReference>
<dbReference type="EMBL" id="AK226760">
    <property type="protein sequence ID" value="BAE98860.1"/>
    <property type="molecule type" value="mRNA"/>
</dbReference>
<dbReference type="PIR" id="D84767">
    <property type="entry name" value="D84767"/>
</dbReference>
<dbReference type="RefSeq" id="NP_181077.3">
    <property type="nucleotide sequence ID" value="NM_129086.4"/>
</dbReference>
<dbReference type="SMR" id="F4IJV4"/>
<dbReference type="FunCoup" id="F4IJV4">
    <property type="interactions" value="3002"/>
</dbReference>
<dbReference type="STRING" id="3702.F4IJV4"/>
<dbReference type="iPTMnet" id="F4IJV4"/>
<dbReference type="PaxDb" id="3702-AT2G35340.1"/>
<dbReference type="ProteomicsDB" id="224048"/>
<dbReference type="EnsemblPlants" id="AT2G35340.1">
    <property type="protein sequence ID" value="AT2G35340.1"/>
    <property type="gene ID" value="AT2G35340"/>
</dbReference>
<dbReference type="GeneID" id="818101"/>
<dbReference type="Gramene" id="AT2G35340.1">
    <property type="protein sequence ID" value="AT2G35340.1"/>
    <property type="gene ID" value="AT2G35340"/>
</dbReference>
<dbReference type="KEGG" id="ath:AT2G35340"/>
<dbReference type="Araport" id="AT2G35340"/>
<dbReference type="TAIR" id="AT2G35340">
    <property type="gene designation" value="MEE29"/>
</dbReference>
<dbReference type="eggNOG" id="KOG0923">
    <property type="taxonomic scope" value="Eukaryota"/>
</dbReference>
<dbReference type="HOGENOM" id="CLU_001832_7_1_1"/>
<dbReference type="InParanoid" id="F4IJV4"/>
<dbReference type="PRO" id="PR:F4IJV4"/>
<dbReference type="Proteomes" id="UP000006548">
    <property type="component" value="Chromosome 2"/>
</dbReference>
<dbReference type="ExpressionAtlas" id="F4IJV4">
    <property type="expression patterns" value="baseline and differential"/>
</dbReference>
<dbReference type="GO" id="GO:0005681">
    <property type="term" value="C:spliceosomal complex"/>
    <property type="evidence" value="ECO:0007669"/>
    <property type="project" value="UniProtKB-KW"/>
</dbReference>
<dbReference type="GO" id="GO:0005524">
    <property type="term" value="F:ATP binding"/>
    <property type="evidence" value="ECO:0007669"/>
    <property type="project" value="UniProtKB-KW"/>
</dbReference>
<dbReference type="GO" id="GO:0016887">
    <property type="term" value="F:ATP hydrolysis activity"/>
    <property type="evidence" value="ECO:0007669"/>
    <property type="project" value="InterPro"/>
</dbReference>
<dbReference type="GO" id="GO:0003724">
    <property type="term" value="F:RNA helicase activity"/>
    <property type="evidence" value="ECO:0007669"/>
    <property type="project" value="UniProtKB-EC"/>
</dbReference>
<dbReference type="GO" id="GO:0009793">
    <property type="term" value="P:embryo development ending in seed dormancy"/>
    <property type="evidence" value="ECO:0000315"/>
    <property type="project" value="TAIR"/>
</dbReference>
<dbReference type="GO" id="GO:0006397">
    <property type="term" value="P:mRNA processing"/>
    <property type="evidence" value="ECO:0007669"/>
    <property type="project" value="UniProtKB-KW"/>
</dbReference>
<dbReference type="GO" id="GO:0008380">
    <property type="term" value="P:RNA splicing"/>
    <property type="evidence" value="ECO:0007669"/>
    <property type="project" value="UniProtKB-KW"/>
</dbReference>
<dbReference type="CDD" id="cd17974">
    <property type="entry name" value="DEXHc_DHX16"/>
    <property type="match status" value="1"/>
</dbReference>
<dbReference type="CDD" id="cd18791">
    <property type="entry name" value="SF2_C_RHA"/>
    <property type="match status" value="1"/>
</dbReference>
<dbReference type="FunFam" id="1.20.120.1080:FF:000001">
    <property type="entry name" value="Pre-mRNA-splicing factor ATP-dependent RNA helicase"/>
    <property type="match status" value="1"/>
</dbReference>
<dbReference type="FunFam" id="3.40.50.300:FF:000007">
    <property type="entry name" value="Pre-mRNA-splicing factor ATP-dependent RNA helicase"/>
    <property type="match status" value="1"/>
</dbReference>
<dbReference type="FunFam" id="3.40.50.300:FF:000594">
    <property type="entry name" value="Pre-mRNA-splicing factor ATP-dependent RNA helicase"/>
    <property type="match status" value="1"/>
</dbReference>
<dbReference type="Gene3D" id="1.20.120.1080">
    <property type="match status" value="1"/>
</dbReference>
<dbReference type="Gene3D" id="3.40.50.300">
    <property type="entry name" value="P-loop containing nucleotide triphosphate hydrolases"/>
    <property type="match status" value="2"/>
</dbReference>
<dbReference type="InterPro" id="IPR049945">
    <property type="entry name" value="AAA_22"/>
</dbReference>
<dbReference type="InterPro" id="IPR011709">
    <property type="entry name" value="DEAD-box_helicase_OB_fold"/>
</dbReference>
<dbReference type="InterPro" id="IPR002464">
    <property type="entry name" value="DNA/RNA_helicase_DEAH_CS"/>
</dbReference>
<dbReference type="InterPro" id="IPR048333">
    <property type="entry name" value="HA2_WH"/>
</dbReference>
<dbReference type="InterPro" id="IPR007502">
    <property type="entry name" value="Helicase-assoc_dom"/>
</dbReference>
<dbReference type="InterPro" id="IPR014001">
    <property type="entry name" value="Helicase_ATP-bd"/>
</dbReference>
<dbReference type="InterPro" id="IPR001650">
    <property type="entry name" value="Helicase_C-like"/>
</dbReference>
<dbReference type="InterPro" id="IPR027417">
    <property type="entry name" value="P-loop_NTPase"/>
</dbReference>
<dbReference type="PANTHER" id="PTHR18934">
    <property type="entry name" value="ATP-DEPENDENT RNA HELICASE"/>
    <property type="match status" value="1"/>
</dbReference>
<dbReference type="PANTHER" id="PTHR18934:SF83">
    <property type="entry name" value="PRE-MRNA-SPLICING FACTOR ATP-DEPENDENT RNA HELICASE DHX16"/>
    <property type="match status" value="1"/>
</dbReference>
<dbReference type="Pfam" id="PF13401">
    <property type="entry name" value="AAA_22"/>
    <property type="match status" value="1"/>
</dbReference>
<dbReference type="Pfam" id="PF21010">
    <property type="entry name" value="HA2_C"/>
    <property type="match status" value="1"/>
</dbReference>
<dbReference type="Pfam" id="PF04408">
    <property type="entry name" value="HA2_N"/>
    <property type="match status" value="1"/>
</dbReference>
<dbReference type="Pfam" id="PF00271">
    <property type="entry name" value="Helicase_C"/>
    <property type="match status" value="1"/>
</dbReference>
<dbReference type="Pfam" id="PF07717">
    <property type="entry name" value="OB_NTP_bind"/>
    <property type="match status" value="1"/>
</dbReference>
<dbReference type="SMART" id="SM00487">
    <property type="entry name" value="DEXDc"/>
    <property type="match status" value="1"/>
</dbReference>
<dbReference type="SMART" id="SM00847">
    <property type="entry name" value="HA2"/>
    <property type="match status" value="1"/>
</dbReference>
<dbReference type="SMART" id="SM00490">
    <property type="entry name" value="HELICc"/>
    <property type="match status" value="1"/>
</dbReference>
<dbReference type="SUPFAM" id="SSF52540">
    <property type="entry name" value="P-loop containing nucleoside triphosphate hydrolases"/>
    <property type="match status" value="1"/>
</dbReference>
<dbReference type="PROSITE" id="PS00690">
    <property type="entry name" value="DEAH_ATP_HELICASE"/>
    <property type="match status" value="1"/>
</dbReference>
<dbReference type="PROSITE" id="PS51192">
    <property type="entry name" value="HELICASE_ATP_BIND_1"/>
    <property type="match status" value="1"/>
</dbReference>
<dbReference type="PROSITE" id="PS51194">
    <property type="entry name" value="HELICASE_CTER"/>
    <property type="match status" value="1"/>
</dbReference>
<evidence type="ECO:0000255" key="1">
    <source>
        <dbReference type="PROSITE-ProRule" id="PRU00541"/>
    </source>
</evidence>
<evidence type="ECO:0000255" key="2">
    <source>
        <dbReference type="PROSITE-ProRule" id="PRU00542"/>
    </source>
</evidence>
<evidence type="ECO:0000256" key="3">
    <source>
        <dbReference type="SAM" id="MobiDB-lite"/>
    </source>
</evidence>
<evidence type="ECO:0000269" key="4">
    <source>
    </source>
</evidence>
<evidence type="ECO:0000269" key="5">
    <source>
    </source>
</evidence>
<evidence type="ECO:0000303" key="6">
    <source>
    </source>
</evidence>
<evidence type="ECO:0000303" key="7">
    <source>
    </source>
</evidence>
<evidence type="ECO:0000305" key="8"/>
<evidence type="ECO:0000312" key="9">
    <source>
        <dbReference type="Araport" id="AT2G35340"/>
    </source>
</evidence>
<evidence type="ECO:0000312" key="10">
    <source>
        <dbReference type="EMBL" id="AAC36188.1"/>
    </source>
</evidence>
<proteinExistence type="evidence at transcript level"/>
<feature type="chain" id="PRO_0000434935" description="Probable pre-mRNA-splicing factor ATP-dependent RNA helicase DEAH6">
    <location>
        <begin position="1"/>
        <end position="1044"/>
    </location>
</feature>
<feature type="domain" description="Helicase ATP-binding" evidence="1">
    <location>
        <begin position="414"/>
        <end position="577"/>
    </location>
</feature>
<feature type="domain" description="Helicase C-terminal" evidence="2">
    <location>
        <begin position="599"/>
        <end position="775"/>
    </location>
</feature>
<feature type="region of interest" description="Disordered" evidence="3">
    <location>
        <begin position="99"/>
        <end position="134"/>
    </location>
</feature>
<feature type="region of interest" description="Disordered" evidence="3">
    <location>
        <begin position="152"/>
        <end position="211"/>
    </location>
</feature>
<feature type="short sequence motif" description="DEAH box" evidence="1">
    <location>
        <begin position="524"/>
        <end position="527"/>
    </location>
</feature>
<feature type="compositionally biased region" description="Acidic residues" evidence="3">
    <location>
        <begin position="157"/>
        <end position="167"/>
    </location>
</feature>
<feature type="compositionally biased region" description="Basic and acidic residues" evidence="3">
    <location>
        <begin position="168"/>
        <end position="211"/>
    </location>
</feature>
<feature type="binding site" evidence="1">
    <location>
        <begin position="427"/>
        <end position="434"/>
    </location>
    <ligand>
        <name>ATP</name>
        <dbReference type="ChEBI" id="CHEBI:30616"/>
    </ligand>
</feature>
<feature type="sequence conflict" description="In Ref. 3; BAE98860." evidence="8" ref="3">
    <original>Y</original>
    <variation>C</variation>
    <location>
        <position position="652"/>
    </location>
</feature>
<feature type="sequence conflict" description="In Ref. 3; BAE98860." evidence="8" ref="3">
    <original>H</original>
    <variation>L</variation>
    <location>
        <position position="955"/>
    </location>
</feature>